<accession>P07293</accession>
<name>CAC1S_RABIT</name>
<comment type="function">
    <text evidence="2 7 13 17 20 21 23 30">Pore-forming, alpha-1S subunit of the voltage-gated calcium channel that gives rise to L-type calcium currents in skeletal muscle (PubMed:15201141, PubMed:25548159, PubMed:27621462, PubMed:29078335, PubMed:29467163, PubMed:9465115). Calcium channels containing the alpha-1S subunit play an important role in excitation-contraction coupling in skeletal muscle via their interaction with RYR1, which triggers Ca(2+) release from the sarcplasmic reticulum and ultimately results in muscle contraction (PubMed:15201141, PubMed:27621462, PubMed:9465115). Long-lasting (L-type) calcium channels belong to the 'high-voltage activated' (HVA) group.</text>
</comment>
<comment type="catalytic activity">
    <reaction evidence="7 13 17 20 21 23">
        <text>Ca(2+)(in) = Ca(2+)(out)</text>
        <dbReference type="Rhea" id="RHEA:29671"/>
        <dbReference type="ChEBI" id="CHEBI:29108"/>
    </reaction>
</comment>
<comment type="activity regulation">
    <text evidence="34 35 37 41">Channel activity is blocked by dihydropyridines (DHP), phenylalkylamines, and by benzothiazepines.</text>
</comment>
<comment type="subunit">
    <text evidence="1 2 5 6 13 14 15 16 17 18 20 21 22">Component of a calcium channel complex consisting of a pore-forming alpha subunit (CACNA1S) and the ancillary subunits CACNB1 or CACNB2, CACNG1 and CACNA2D1 (PubMed:15134636, PubMed:25667046, PubMed:26680202, PubMed:27580036, PubMed:27621462, PubMed:3037387). The channel complex contains alpha, beta, gamma and delta subunits in a 1:1:1:1 ratio, i.e. it contains either CACNB1 or CACNB2 (PubMed:15134636, PubMed:25667046, PubMed:26680202, PubMed:27580036). CACNA1S channel activity is modulated by the auxiliary subunits (CACNB1 or CACNB2, CACNG1 and CACNA2D1). Interacts with DYSF and JSRP1 (By similarity). Interacts with RYR1 (PubMed:10388749). Interacts with STAC, STAC2 and STAC3 (via their SH3 domains) (PubMed:28112192, PubMed:29078335, PubMed:29467163). Interaction with STAC3 promotes expression at the cell membrane (PubMed:25548159, PubMed:29467163). Interaction with STAC2 promotes expression at the cell membrane, but with much lower efficiency than STAC3. Interaction with STAC1 leads to very low levels expression at the cell membrane, much less than the levels observed upon interaction with STAC3 and STAC2 (PubMed:29467163). Interacts with CALM (By similarity).</text>
</comment>
<comment type="interaction">
    <interactant intactId="EBI-8613624">
        <id>P07293</id>
    </interactant>
    <interactant intactId="EBI-9683767">
        <id>P13806</id>
        <label>CACNA2D1</label>
    </interactant>
    <organismsDiffer>false</organismsDiffer>
    <experiments>3</experiments>
</comment>
<comment type="interaction">
    <interactant intactId="EBI-8613624">
        <id>P07293</id>
    </interactant>
    <interactant intactId="EBI-978604">
        <id>P19517</id>
        <label>CACNB1</label>
    </interactant>
    <organismsDiffer>false</organismsDiffer>
    <experiments>4</experiments>
</comment>
<comment type="interaction">
    <interactant intactId="EBI-8613624">
        <id>P07293</id>
    </interactant>
    <interactant intactId="EBI-9683808">
        <id>P19518</id>
        <label>CACNG1</label>
    </interactant>
    <organismsDiffer>false</organismsDiffer>
    <experiments>3</experiments>
</comment>
<comment type="interaction">
    <interactant intactId="EBI-8613624">
        <id>P07293</id>
    </interactant>
    <interactant intactId="EBI-1042651">
        <id>Q96RG2</id>
        <label>PASK</label>
    </interactant>
    <organismsDiffer>true</organismsDiffer>
    <experiments>2</experiments>
</comment>
<comment type="subcellular location">
    <subcellularLocation>
        <location evidence="7 13 14 15 16 17 18 20 21 23 41">Cell membrane</location>
        <location evidence="7 13 14 15 16 17 18 20 21 23 41">Sarcolemma</location>
        <location evidence="7 13 14 15 16 17 18 20 21 23 41">T-tubule</location>
        <topology evidence="14 15 16 41">Multi-pass membrane protein</topology>
    </subcellularLocation>
</comment>
<comment type="tissue specificity">
    <text evidence="14 15 16 22">Detected in skeletal muscle T-tubules (at protein level).</text>
</comment>
<comment type="domain">
    <text evidence="15 16">Each of the four internal repeats contains five hydrophobic transmembrane segments (S1, S2, S3, S5, S6) and one positively charged transmembrane segment (S4). S4 segments probably represent the voltage-sensor and are characterized by a series of positively charged amino acids at every third position.</text>
</comment>
<comment type="domain">
    <text evidence="31 32 33">The loop between repeats II and III interacts with the ryanodine receptor, and is therefore important for calcium release from the endoplasmic reticulum necessary for muscle contraction.</text>
</comment>
<comment type="PTM">
    <text evidence="41">The alpha-1S subunit is found in two isoforms in the skeletal muscle: a minor form of 212 kDa containing the complete amino acid sequence, and a major form of 190 kDa derived from the full-length form by post-translational proteolysis close to Phe-1690.</text>
</comment>
<comment type="PTM">
    <text evidence="10 12 19">Phosphorylated. Phosphorylation by PKA activates the calcium channel. Both the minor and major forms are phosphorylated in vitro by PKA (PubMed:2549550, PubMed:2844809). Phosphorylation at Ser-1575 is involved in beta-adrenergic-mediated regulation of the channel (PubMed:20937870).</text>
</comment>
<comment type="similarity">
    <text evidence="30">Belongs to the calcium channel alpha-1 subunit (TC 1.A.1.11) family. CACNA1S subfamily.</text>
</comment>
<keyword id="KW-0002">3D-structure</keyword>
<keyword id="KW-0106">Calcium</keyword>
<keyword id="KW-0107">Calcium channel</keyword>
<keyword id="KW-0109">Calcium transport</keyword>
<keyword id="KW-0112">Calmodulin-binding</keyword>
<keyword id="KW-1003">Cell membrane</keyword>
<keyword id="KW-0903">Direct protein sequencing</keyword>
<keyword id="KW-1015">Disulfide bond</keyword>
<keyword id="KW-0325">Glycoprotein</keyword>
<keyword id="KW-0407">Ion channel</keyword>
<keyword id="KW-0406">Ion transport</keyword>
<keyword id="KW-0472">Membrane</keyword>
<keyword id="KW-0479">Metal-binding</keyword>
<keyword id="KW-0597">Phosphoprotein</keyword>
<keyword id="KW-1185">Reference proteome</keyword>
<keyword id="KW-0677">Repeat</keyword>
<keyword id="KW-0812">Transmembrane</keyword>
<keyword id="KW-1133">Transmembrane helix</keyword>
<keyword id="KW-0813">Transport</keyword>
<keyword id="KW-0851">Voltage-gated channel</keyword>
<evidence type="ECO:0000250" key="1">
    <source>
        <dbReference type="UniProtKB" id="Q02789"/>
    </source>
</evidence>
<evidence type="ECO:0000250" key="2">
    <source>
        <dbReference type="UniProtKB" id="Q13698"/>
    </source>
</evidence>
<evidence type="ECO:0000255" key="3"/>
<evidence type="ECO:0000256" key="4">
    <source>
        <dbReference type="SAM" id="MobiDB-lite"/>
    </source>
</evidence>
<evidence type="ECO:0000269" key="5">
    <source>
    </source>
</evidence>
<evidence type="ECO:0000269" key="6">
    <source>
    </source>
</evidence>
<evidence type="ECO:0000269" key="7">
    <source>
    </source>
</evidence>
<evidence type="ECO:0000269" key="8">
    <source>
    </source>
</evidence>
<evidence type="ECO:0000269" key="9">
    <source>
    </source>
</evidence>
<evidence type="ECO:0000269" key="10">
    <source>
    </source>
</evidence>
<evidence type="ECO:0000269" key="11">
    <source>
    </source>
</evidence>
<evidence type="ECO:0000269" key="12">
    <source>
    </source>
</evidence>
<evidence type="ECO:0000269" key="13">
    <source>
    </source>
</evidence>
<evidence type="ECO:0000269" key="14">
    <source>
    </source>
</evidence>
<evidence type="ECO:0000269" key="15">
    <source>
    </source>
</evidence>
<evidence type="ECO:0000269" key="16">
    <source>
    </source>
</evidence>
<evidence type="ECO:0000269" key="17">
    <source>
    </source>
</evidence>
<evidence type="ECO:0000269" key="18">
    <source>
    </source>
</evidence>
<evidence type="ECO:0000269" key="19">
    <source>
    </source>
</evidence>
<evidence type="ECO:0000269" key="20">
    <source>
    </source>
</evidence>
<evidence type="ECO:0000269" key="21">
    <source>
    </source>
</evidence>
<evidence type="ECO:0000269" key="22">
    <source>
    </source>
</evidence>
<evidence type="ECO:0000269" key="23">
    <source>
    </source>
</evidence>
<evidence type="ECO:0000303" key="24">
    <source>
    </source>
</evidence>
<evidence type="ECO:0000303" key="25">
    <source>
    </source>
</evidence>
<evidence type="ECO:0000303" key="26">
    <source>
    </source>
</evidence>
<evidence type="ECO:0000303" key="27">
    <source>
    </source>
</evidence>
<evidence type="ECO:0000303" key="28">
    <source>
    </source>
</evidence>
<evidence type="ECO:0000303" key="29">
    <source>
    </source>
</evidence>
<evidence type="ECO:0000305" key="30"/>
<evidence type="ECO:0000305" key="31">
    <source>
    </source>
</evidence>
<evidence type="ECO:0000305" key="32">
    <source>
    </source>
</evidence>
<evidence type="ECO:0000305" key="33">
    <source>
    </source>
</evidence>
<evidence type="ECO:0000305" key="34">
    <source>
    </source>
</evidence>
<evidence type="ECO:0000305" key="35">
    <source>
    </source>
</evidence>
<evidence type="ECO:0000305" key="36">
    <source>
    </source>
</evidence>
<evidence type="ECO:0000305" key="37">
    <source>
    </source>
</evidence>
<evidence type="ECO:0000305" key="38">
    <source>
    </source>
</evidence>
<evidence type="ECO:0000305" key="39">
    <source>
    </source>
</evidence>
<evidence type="ECO:0000305" key="40">
    <source>
    </source>
</evidence>
<evidence type="ECO:0000305" key="41">
    <source>
    </source>
</evidence>
<evidence type="ECO:0007744" key="42">
    <source>
        <dbReference type="PDB" id="3JBR"/>
    </source>
</evidence>
<evidence type="ECO:0007744" key="43">
    <source>
        <dbReference type="PDB" id="5GJV"/>
    </source>
</evidence>
<evidence type="ECO:0007744" key="44">
    <source>
        <dbReference type="PDB" id="5GJW"/>
    </source>
</evidence>
<evidence type="ECO:0007829" key="45">
    <source>
        <dbReference type="PDB" id="1T3L"/>
    </source>
</evidence>
<evidence type="ECO:0007829" key="46">
    <source>
        <dbReference type="PDB" id="6JP8"/>
    </source>
</evidence>
<evidence type="ECO:0007829" key="47">
    <source>
        <dbReference type="PDB" id="6JPA"/>
    </source>
</evidence>
<evidence type="ECO:0007829" key="48">
    <source>
        <dbReference type="PDB" id="7JPK"/>
    </source>
</evidence>
<evidence type="ECO:0007829" key="49">
    <source>
        <dbReference type="PDB" id="7JPX"/>
    </source>
</evidence>
<evidence type="ECO:0007829" key="50">
    <source>
        <dbReference type="PDB" id="8E56"/>
    </source>
</evidence>
<reference key="1">
    <citation type="journal article" date="1987" name="Nature">
        <title>Primary structure of the receptor for calcium channel blockers from skeletal muscle.</title>
        <authorList>
            <person name="Tanabe T."/>
            <person name="Takeshima H."/>
            <person name="Mikami A."/>
            <person name="Flockerzi V."/>
            <person name="Takahashi H."/>
            <person name="Kangawa K."/>
            <person name="Kojima M."/>
            <person name="Matsuo H."/>
            <person name="Hirose T."/>
            <person name="Numa S."/>
        </authorList>
    </citation>
    <scope>NUCLEOTIDE SEQUENCE [MRNA]</scope>
    <scope>PARTIAL PROTEIN SEQUENCE</scope>
    <scope>TISSUE SPECIFICITY</scope>
    <scope>DIHYDROPYRIDINE BINDING</scope>
    <scope>SUBUNIT</scope>
    <scope>SUBCELLULAR LOCATION</scope>
    <source>
        <tissue>Skeletal muscle</tissue>
    </source>
</reference>
<reference key="2">
    <citation type="journal article" date="1988" name="Science">
        <title>Sequence and expression of mRNAs encoding the alpha 1 and alpha 2 subunits of a DHP-sensitive calcium channel.</title>
        <authorList>
            <person name="Ellis S.B."/>
            <person name="Williams M.E."/>
            <person name="Ways N.R."/>
            <person name="Brenner R."/>
            <person name="Sharp A.H."/>
            <person name="Leung A.T."/>
            <person name="Campbell K.P."/>
            <person name="McKenna E."/>
            <person name="Koch W.J."/>
            <person name="Hui A."/>
            <person name="Schwartz A."/>
            <person name="Harpold M.M."/>
        </authorList>
    </citation>
    <scope>NUCLEOTIDE SEQUENCE [MRNA]</scope>
    <source>
        <tissue>Skeletal muscle</tissue>
    </source>
</reference>
<reference key="3">
    <citation type="journal article" date="1994" name="Nature">
        <title>Calcium channel beta-subunit binds to a conserved motif in the I-II cytoplasmic linker of the alpha 1-subunit.</title>
        <authorList>
            <person name="Pragnell M."/>
            <person name="de Waard M."/>
            <person name="Mori Y."/>
            <person name="Tanabe T."/>
            <person name="Snutch T.P."/>
            <person name="Campbell K.P."/>
        </authorList>
    </citation>
    <scope>BETA-SUBUNIT BINDING DOMAIN</scope>
    <scope>INTERACTION WITH CACNB1</scope>
</reference>
<reference key="4">
    <citation type="journal article" date="1990" name="Proc. Natl. Acad. Sci. U.S.A.">
        <title>Identification of a phenylalkylamine binding region within the alpha 1 subunit of skeletal muscle Ca2+ channels.</title>
        <authorList>
            <person name="Striessnig J."/>
            <person name="Glossmann H."/>
            <person name="Catterall W.A."/>
        </authorList>
    </citation>
    <scope>PHENYLALKYLAMINE-BINDING REGION</scope>
</reference>
<reference key="5">
    <citation type="journal article" date="1991" name="Proc. Natl. Acad. Sci. U.S.A.">
        <title>Identification of 1,4-dihydropyridine binding regions within the alpha 1 subunit of skeletal muscle Ca2+ channels by photoaffinity labeling with diazipine.</title>
        <authorList>
            <person name="Nakayama H."/>
            <person name="Taki M."/>
            <person name="Striessnig J."/>
            <person name="Glossmann H."/>
            <person name="Catterall W.A."/>
            <person name="Kanaoka Y."/>
        </authorList>
    </citation>
    <scope>DIHYDROPYRIDINE-BINDING REGION</scope>
</reference>
<reference key="6">
    <citation type="journal article" date="1991" name="Proc. Natl. Acad. Sci. U.S.A.">
        <title>Dihydropyridine receptor of L-type Ca2+ channels: identification of binding domains for [3H](+)-PN200-110 and [3H]azidopine within the alpha 1 subunit.</title>
        <authorList>
            <person name="Striessnig J."/>
            <person name="Murphy B.J."/>
            <person name="Catterall W.A."/>
        </authorList>
    </citation>
    <scope>DIHYDROPYRIDINE-BINDING REGION</scope>
</reference>
<reference key="7">
    <citation type="journal article" date="1988" name="J. Biol. Chem.">
        <title>CAMP-dependent protein kinase rapidly phosphorylates serine-687 of the skeletal muscle receptor for calcium channel blockers.</title>
        <authorList>
            <person name="Roehrkasten A."/>
            <person name="Meyer H.E."/>
            <person name="Nastainczyk W."/>
            <person name="Sieber M."/>
            <person name="Hofmann F."/>
        </authorList>
    </citation>
    <scope>PHOSPHORYLATION AT SER-687 AND SER-1617</scope>
</reference>
<reference key="8">
    <citation type="journal article" date="1989" name="Proc. Natl. Acad. Sci. U.S.A.">
        <title>Activation of purified calcium channels by stoichiometric protein phosphorylation.</title>
        <authorList>
            <person name="Nunoki K."/>
            <person name="Florio V."/>
            <person name="Catterall W.A."/>
        </authorList>
    </citation>
    <scope>PHOSPHORYLATION BY PKA</scope>
</reference>
<reference key="9">
    <citation type="journal article" date="1998" name="Proc. Natl. Acad. Sci. U.S.A.">
        <title>Tagging with green fluorescent protein reveals a distinct subcellular distribution of L-type and non-L-type Ca2+ channels expressed in dysgenic myotubes.</title>
        <authorList>
            <person name="Grabner M."/>
            <person name="Dirksen R.T."/>
            <person name="Beam K.G."/>
        </authorList>
    </citation>
    <scope>FUNCTION</scope>
    <scope>SUBCELLULAR LOCATION</scope>
    <scope>TRANSPORTER ACTIVITY</scope>
</reference>
<reference key="10">
    <citation type="journal article" date="1999" name="Biophys. J.">
        <title>Activation and inhibition of skeletal RyR channels by a part of the skeletal DHPR II-III loop: effects of DHPR Ser687 and FKBP12.</title>
        <authorList>
            <person name="Dulhunty A.F."/>
            <person name="Laver D.R."/>
            <person name="Gallant E.M."/>
            <person name="Casarotto M.G."/>
            <person name="Pace S.M."/>
            <person name="Curtis S."/>
        </authorList>
    </citation>
    <scope>INTERACTION WITH RYR1</scope>
    <scope>DOMAIN</scope>
</reference>
<reference key="11">
    <citation type="journal article" date="2004" name="Am. J. Physiol.">
        <title>Functional analysis of the R1086H malignant hyperthermia mutation in the DHPR reveals an unexpected influence of the III-IV loop on skeletal muscle EC coupling.</title>
        <authorList>
            <person name="Weiss R.G."/>
            <person name="O'Connell K.M."/>
            <person name="Flucher B.E."/>
            <person name="Allen P.D."/>
            <person name="Grabner M."/>
            <person name="Dirksen R.T."/>
        </authorList>
    </citation>
    <scope>FUNCTION</scope>
    <scope>MUTAGENESIS OF ARG-1086</scope>
    <scope>SUBCELLULAR LOCATION</scope>
    <scope>DOMAIN</scope>
    <scope>TRANSPORTER ACTIVITY</scope>
</reference>
<reference key="12">
    <citation type="journal article" date="2010" name="Proc. Natl. Acad. Sci. U.S.A.">
        <title>Beta-adrenergic-regulated phosphorylation of the skeletal muscle Ca(V)1.1 channel in the fight-or-flight response.</title>
        <authorList>
            <person name="Emrick M.A."/>
            <person name="Sadilek M."/>
            <person name="Konoki K."/>
            <person name="Catterall W.A."/>
        </authorList>
    </citation>
    <scope>PHOSPHORYLATION AT SER-1575 AND THR-1579</scope>
</reference>
<reference key="13">
    <citation type="journal article" date="2015" name="Proc. Natl. Acad. Sci. U.S.A.">
        <title>Stac adaptor proteins regulate trafficking and function of muscle and neuronal L-type Ca2+ channels.</title>
        <authorList>
            <person name="Polster A."/>
            <person name="Perni S."/>
            <person name="Bichraoui H."/>
            <person name="Beam K.G."/>
        </authorList>
    </citation>
    <scope>FUNCTION</scope>
    <scope>SUBUNIT</scope>
    <scope>SUBCELLULAR LOCATION</scope>
    <scope>TRANSPORTER ACTIVITY</scope>
</reference>
<reference key="14">
    <citation type="journal article" date="2016" name="Proc. Natl. Acad. Sci. U.S.A.">
        <title>Stac3 has a direct role in skeletal muscle-type excitation-contraction coupling that is disrupted by a myopathy-causing mutation.</title>
        <authorList>
            <person name="Polster A."/>
            <person name="Nelson B.R."/>
            <person name="Olson E.N."/>
            <person name="Beam K.G."/>
        </authorList>
    </citation>
    <scope>FUNCTION</scope>
    <scope>SUBUNIT</scope>
    <scope>SUBCELLULAR LOCATION</scope>
    <scope>TRANSPORTER ACTIVITY</scope>
</reference>
<reference key="15">
    <citation type="journal article" date="2017" name="Proc. Natl. Acad. Sci. U.S.A.">
        <title>Structural insights into binding of STAC proteins to voltage-gated calcium channels.</title>
        <authorList>
            <person name="Wong King Yuen S.M."/>
            <person name="Campiglio M."/>
            <person name="Tung C.C."/>
            <person name="Flucher B.E."/>
            <person name="Van Petegem F."/>
        </authorList>
    </citation>
    <scope>FUNCTION</scope>
    <scope>SUBUNIT</scope>
    <scope>INTERACTION WITH STAC; STAC1 AND STAC2</scope>
    <scope>SUBCELLULAR LOCATION</scope>
    <scope>MUTAGENESIS OF 752-ILE-PRO-753; 756-PRO--PRO-758 AND ARG-757</scope>
    <scope>TRANSPORTER ACTIVITY</scope>
</reference>
<reference key="16">
    <citation type="journal article" date="2017" name="Sci. Rep.">
        <title>STAC3 stably interacts through its C1 domain with CaV1.1 in skeletal muscle triads.</title>
        <authorList>
            <person name="Campiglio M."/>
            <person name="Flucher B.E."/>
        </authorList>
    </citation>
    <scope>INTERACTION WITH STAC; STAC2 AND STAC3</scope>
    <scope>SUBCELLULAR LOCATION</scope>
</reference>
<reference key="17">
    <citation type="journal article" date="2018" name="J. Gen. Physiol.">
        <title>STAC proteins associate with the critical domain for excitation-contraction coupling in the II-III loop of CaV1.1.</title>
        <authorList>
            <person name="Polster A."/>
            <person name="Nelson B.R."/>
            <person name="Papadopoulos S."/>
            <person name="Olson E.N."/>
            <person name="Beam K.G."/>
        </authorList>
    </citation>
    <scope>FUNCTION</scope>
    <scope>INTERACTION WITH STAC; STAC2 AND STAC3</scope>
    <scope>SUBCELLULAR LOCATION</scope>
    <scope>TRANSPORTER ACTIVITY</scope>
</reference>
<reference key="18">
    <citation type="journal article" date="2000" name="J. Biol. Chem.">
        <title>A structural requirement for activation of skeletal ryanodine receptors by peptides of the dihydropyridine receptor II-III loop.</title>
        <authorList>
            <person name="Casarotto M.G."/>
            <person name="Gibson F."/>
            <person name="Pace S.M."/>
            <person name="Curtis S.M."/>
            <person name="Mulcair M."/>
            <person name="Dulhunty A.F."/>
        </authorList>
    </citation>
    <scope>STRUCTURE BY NMR OF 671-690</scope>
    <scope>DOMAIN</scope>
</reference>
<reference key="19">
    <citation type="journal article" date="2004" name="Neuron">
        <title>Structural analysis of the voltage-dependent calcium channel beta subunit functional core and its complex with the alpha1 interaction domain.</title>
        <authorList>
            <person name="Opatowsky Y."/>
            <person name="Chen C.-C."/>
            <person name="Campbell K.P."/>
            <person name="Hirsch J.A."/>
        </authorList>
    </citation>
    <scope>X-RAY CRYSTALLOGRAPHY (2.2 ANGSTROMS) OF 34-415 IN COMPLEX WITH CACNB2</scope>
    <scope>SUBUNIT</scope>
</reference>
<reference key="20">
    <citation type="journal article" date="2015" name="Sci. Rep.">
        <title>The molecular architecture of dihydropyrindine receptor/L-type Ca2+ channel complex.</title>
        <authorList>
            <person name="Hu H."/>
            <person name="Wang Z."/>
            <person name="Wei R."/>
            <person name="Fan G."/>
            <person name="Wang Q."/>
            <person name="Zhang K."/>
            <person name="Yin C.C."/>
        </authorList>
    </citation>
    <scope>STRUCTURE BY ELECTRON MICROSCOPY (15 ANGSTROMS)</scope>
    <scope>SUBUNIT</scope>
    <scope>TISSUE SPECIFICITY</scope>
    <scope>SUBCELLULAR LOCATION</scope>
    <scope>TOPOLOGY</scope>
    <source>
        <tissue evidence="27">Skeletal muscle</tissue>
    </source>
</reference>
<reference evidence="42" key="21">
    <citation type="journal article" date="2015" name="Science">
        <title>Structure of the voltage-gated calcium channel Cav1.1 complex.</title>
        <authorList>
            <person name="Wu J."/>
            <person name="Yan Z."/>
            <person name="Li Z."/>
            <person name="Yan C."/>
            <person name="Lu S."/>
            <person name="Dong M."/>
            <person name="Yan N."/>
        </authorList>
    </citation>
    <scope>STRUCTURE BY ELECTRON MICROSCOPY (4.20 ANGSTROMS) IN COMPLEX WITH CACNG1; CACNB2 AND CACNA2D1</scope>
    <scope>SUBUNIT</scope>
    <scope>SUBCELLULAR LOCATION</scope>
    <scope>TOPOLOGY</scope>
    <scope>TISSUE SPECIFICITY</scope>
    <scope>IDENTIFICATION BY MASS SPECTROMETRY</scope>
    <scope>DOMAIN</scope>
    <source>
        <tissue evidence="28">Skeletal muscle</tissue>
    </source>
</reference>
<reference evidence="43 44" key="22">
    <citation type="journal article" date="2016" name="Nature">
        <title>Structure of the voltage-gated calcium channel Ca(v)1.1 at 3.6A resolution.</title>
        <authorList>
            <person name="Wu J."/>
            <person name="Yan Z."/>
            <person name="Li Z."/>
            <person name="Qian X."/>
            <person name="Lu S."/>
            <person name="Dong M."/>
            <person name="Zhou Q."/>
            <person name="Yan N."/>
        </authorList>
    </citation>
    <scope>STRUCTURE BY ELECTRON MICROSCOPY (3.60 ANGSTROMS) IN COMPLEX WITH CALCIUM; CACNB1; CACNG1 AND CACNA2D1</scope>
    <scope>SUBUNIT</scope>
    <scope>SUBCELLULAR LOCATION</scope>
    <scope>TOPOLOGY</scope>
    <scope>TISSUE SPECIFICITY</scope>
    <scope>IDENTIFICATION BY MASS SPECTROMETRY</scope>
    <scope>DOMAIN</scope>
    <scope>DISULFIDE BONDS</scope>
    <scope>GLYCOSYLATION AT ASN-257</scope>
    <source>
        <tissue evidence="29">Skeletal muscle</tissue>
    </source>
</reference>
<organism>
    <name type="scientific">Oryctolagus cuniculus</name>
    <name type="common">Rabbit</name>
    <dbReference type="NCBI Taxonomy" id="9986"/>
    <lineage>
        <taxon>Eukaryota</taxon>
        <taxon>Metazoa</taxon>
        <taxon>Chordata</taxon>
        <taxon>Craniata</taxon>
        <taxon>Vertebrata</taxon>
        <taxon>Euteleostomi</taxon>
        <taxon>Mammalia</taxon>
        <taxon>Eutheria</taxon>
        <taxon>Euarchontoglires</taxon>
        <taxon>Glires</taxon>
        <taxon>Lagomorpha</taxon>
        <taxon>Leporidae</taxon>
        <taxon>Oryctolagus</taxon>
    </lineage>
</organism>
<dbReference type="EMBL" id="X05921">
    <property type="protein sequence ID" value="CAA29355.1"/>
    <property type="molecule type" value="mRNA"/>
</dbReference>
<dbReference type="EMBL" id="M23919">
    <property type="protein sequence ID" value="AAA31159.1"/>
    <property type="molecule type" value="mRNA"/>
</dbReference>
<dbReference type="PIR" id="A30063">
    <property type="entry name" value="A30063"/>
</dbReference>
<dbReference type="RefSeq" id="NP_001095190.1">
    <property type="nucleotide sequence ID" value="NM_001101720.1"/>
</dbReference>
<dbReference type="PDB" id="1DU1">
    <property type="method" value="NMR"/>
    <property type="chains" value="A=671-690"/>
</dbReference>
<dbReference type="PDB" id="1JZP">
    <property type="method" value="NMR"/>
    <property type="chains" value="A=671-690"/>
</dbReference>
<dbReference type="PDB" id="1T3L">
    <property type="method" value="X-ray"/>
    <property type="resolution" value="2.20 A"/>
    <property type="chains" value="B=357-374"/>
</dbReference>
<dbReference type="PDB" id="3JBR">
    <property type="method" value="EM"/>
    <property type="resolution" value="4.20 A"/>
    <property type="chains" value="A=1-1873"/>
</dbReference>
<dbReference type="PDB" id="5GJV">
    <property type="method" value="EM"/>
    <property type="resolution" value="3.60 A"/>
    <property type="chains" value="A=1-1873"/>
</dbReference>
<dbReference type="PDB" id="5GJW">
    <property type="method" value="EM"/>
    <property type="resolution" value="3.90 A"/>
    <property type="chains" value="A=1-1873"/>
</dbReference>
<dbReference type="PDB" id="6BYO">
    <property type="method" value="EM"/>
    <property type="resolution" value="3.60 A"/>
    <property type="chains" value="A=32-1388"/>
</dbReference>
<dbReference type="PDB" id="6JP5">
    <property type="method" value="EM"/>
    <property type="resolution" value="2.90 A"/>
    <property type="chains" value="A=1-1873"/>
</dbReference>
<dbReference type="PDB" id="6JP8">
    <property type="method" value="EM"/>
    <property type="resolution" value="2.70 A"/>
    <property type="chains" value="A=1-1873"/>
</dbReference>
<dbReference type="PDB" id="6JPA">
    <property type="method" value="EM"/>
    <property type="resolution" value="2.60 A"/>
    <property type="chains" value="A=1-1506"/>
</dbReference>
<dbReference type="PDB" id="6JPB">
    <property type="method" value="EM"/>
    <property type="resolution" value="2.90 A"/>
    <property type="chains" value="A=1-1873"/>
</dbReference>
<dbReference type="PDB" id="7JPK">
    <property type="method" value="EM"/>
    <property type="resolution" value="3.00 A"/>
    <property type="chains" value="A=1-1873"/>
</dbReference>
<dbReference type="PDB" id="7JPL">
    <property type="method" value="EM"/>
    <property type="resolution" value="3.40 A"/>
    <property type="chains" value="A=1-1873"/>
</dbReference>
<dbReference type="PDB" id="7JPV">
    <property type="method" value="EM"/>
    <property type="resolution" value="3.40 A"/>
    <property type="chains" value="A=1-1873"/>
</dbReference>
<dbReference type="PDB" id="7JPW">
    <property type="method" value="EM"/>
    <property type="resolution" value="3.20 A"/>
    <property type="chains" value="A=1-1873"/>
</dbReference>
<dbReference type="PDB" id="7JPX">
    <property type="method" value="EM"/>
    <property type="resolution" value="2.90 A"/>
    <property type="chains" value="A=1-1873"/>
</dbReference>
<dbReference type="PDB" id="7RXQ">
    <property type="method" value="X-ray"/>
    <property type="resolution" value="2.03 A"/>
    <property type="chains" value="B=1594-1609"/>
</dbReference>
<dbReference type="PDB" id="8E56">
    <property type="method" value="EM"/>
    <property type="resolution" value="2.80 A"/>
    <property type="chains" value="A=1-1873"/>
</dbReference>
<dbReference type="PDB" id="8E57">
    <property type="method" value="EM"/>
    <property type="resolution" value="2.80 A"/>
    <property type="chains" value="A=1-1873"/>
</dbReference>
<dbReference type="PDB" id="8E58">
    <property type="method" value="EM"/>
    <property type="resolution" value="3.00 A"/>
    <property type="chains" value="A=1-1873"/>
</dbReference>
<dbReference type="PDBsum" id="1DU1"/>
<dbReference type="PDBsum" id="1JZP"/>
<dbReference type="PDBsum" id="1T3L"/>
<dbReference type="PDBsum" id="3JBR"/>
<dbReference type="PDBsum" id="5GJV"/>
<dbReference type="PDBsum" id="5GJW"/>
<dbReference type="PDBsum" id="6BYO"/>
<dbReference type="PDBsum" id="6JP5"/>
<dbReference type="PDBsum" id="6JP8"/>
<dbReference type="PDBsum" id="6JPA"/>
<dbReference type="PDBsum" id="6JPB"/>
<dbReference type="PDBsum" id="7JPK"/>
<dbReference type="PDBsum" id="7JPL"/>
<dbReference type="PDBsum" id="7JPV"/>
<dbReference type="PDBsum" id="7JPW"/>
<dbReference type="PDBsum" id="7JPX"/>
<dbReference type="PDBsum" id="7RXQ"/>
<dbReference type="PDBsum" id="8E56"/>
<dbReference type="PDBsum" id="8E57"/>
<dbReference type="PDBsum" id="8E58"/>
<dbReference type="BMRB" id="P07293"/>
<dbReference type="EMDB" id="EMD-22414"/>
<dbReference type="EMDB" id="EMD-22415"/>
<dbReference type="EMDB" id="EMD-22424"/>
<dbReference type="EMDB" id="EMD-22425"/>
<dbReference type="EMDB" id="EMD-22426"/>
<dbReference type="EMDB" id="EMD-27904"/>
<dbReference type="EMDB" id="EMD-27905"/>
<dbReference type="EMDB" id="EMD-27906"/>
<dbReference type="EMDB" id="EMD-6475"/>
<dbReference type="EMDB" id="EMD-6476"/>
<dbReference type="EMDB" id="EMD-9513"/>
<dbReference type="EMDB" id="EMD-9515"/>
<dbReference type="EMDB" id="EMD-9866"/>
<dbReference type="EMDB" id="EMD-9867"/>
<dbReference type="EMDB" id="EMD-9868"/>
<dbReference type="EMDB" id="EMD-9869"/>
<dbReference type="SMR" id="P07293"/>
<dbReference type="BioGRID" id="1172604">
    <property type="interactions" value="1"/>
</dbReference>
<dbReference type="ComplexPortal" id="CPX-3189">
    <property type="entry name" value="Cav1.1 voltage-gated calcium channel complex, CACNA2D1-CACNB1-CACNG1 variant"/>
</dbReference>
<dbReference type="CORUM" id="P07293"/>
<dbReference type="DIP" id="DIP-61879N"/>
<dbReference type="FunCoup" id="P07293">
    <property type="interactions" value="54"/>
</dbReference>
<dbReference type="IntAct" id="P07293">
    <property type="interactions" value="4"/>
</dbReference>
<dbReference type="MINT" id="P07293"/>
<dbReference type="STRING" id="9986.ENSOCUP00000023753"/>
<dbReference type="ChEMBL" id="CHEMBL4169"/>
<dbReference type="TCDB" id="1.A.1.11.2">
    <property type="family name" value="the voltage-gated ion channel (vic) superfamily"/>
</dbReference>
<dbReference type="GlyCosmos" id="P07293">
    <property type="glycosylation" value="2 sites, No reported glycans"/>
</dbReference>
<dbReference type="iPTMnet" id="P07293"/>
<dbReference type="SwissPalm" id="P07293"/>
<dbReference type="PaxDb" id="9986-ENSOCUP00000003147"/>
<dbReference type="GeneID" id="100009585"/>
<dbReference type="KEGG" id="ocu:100009585"/>
<dbReference type="CTD" id="779"/>
<dbReference type="eggNOG" id="KOG2301">
    <property type="taxonomic scope" value="Eukaryota"/>
</dbReference>
<dbReference type="InParanoid" id="P07293"/>
<dbReference type="OrthoDB" id="431720at2759"/>
<dbReference type="EvolutionaryTrace" id="P07293"/>
<dbReference type="PRO" id="PR:P07293"/>
<dbReference type="Proteomes" id="UP000001811">
    <property type="component" value="Unplaced"/>
</dbReference>
<dbReference type="GO" id="GO:1990454">
    <property type="term" value="C:L-type voltage-gated calcium channel complex"/>
    <property type="evidence" value="ECO:0000314"/>
    <property type="project" value="UniProtKB"/>
</dbReference>
<dbReference type="GO" id="GO:0005886">
    <property type="term" value="C:plasma membrane"/>
    <property type="evidence" value="ECO:0000314"/>
    <property type="project" value="UniProtKB"/>
</dbReference>
<dbReference type="GO" id="GO:0030315">
    <property type="term" value="C:T-tubule"/>
    <property type="evidence" value="ECO:0000314"/>
    <property type="project" value="UniProtKB"/>
</dbReference>
<dbReference type="GO" id="GO:0005516">
    <property type="term" value="F:calmodulin binding"/>
    <property type="evidence" value="ECO:0007669"/>
    <property type="project" value="UniProtKB-KW"/>
</dbReference>
<dbReference type="GO" id="GO:0008331">
    <property type="term" value="F:high voltage-gated calcium channel activity"/>
    <property type="evidence" value="ECO:0007669"/>
    <property type="project" value="TreeGrafter"/>
</dbReference>
<dbReference type="GO" id="GO:0046872">
    <property type="term" value="F:metal ion binding"/>
    <property type="evidence" value="ECO:0007669"/>
    <property type="project" value="UniProtKB-KW"/>
</dbReference>
<dbReference type="GO" id="GO:0044325">
    <property type="term" value="F:transmembrane transporter binding"/>
    <property type="evidence" value="ECO:0000353"/>
    <property type="project" value="CAFA"/>
</dbReference>
<dbReference type="GO" id="GO:0005245">
    <property type="term" value="F:voltage-gated calcium channel activity"/>
    <property type="evidence" value="ECO:0000314"/>
    <property type="project" value="UniProtKB"/>
</dbReference>
<dbReference type="GO" id="GO:0098703">
    <property type="term" value="P:calcium ion import across plasma membrane"/>
    <property type="evidence" value="ECO:0007669"/>
    <property type="project" value="TreeGrafter"/>
</dbReference>
<dbReference type="GO" id="GO:0070588">
    <property type="term" value="P:calcium ion transmembrane transport"/>
    <property type="evidence" value="ECO:0000314"/>
    <property type="project" value="UniProtKB"/>
</dbReference>
<dbReference type="GO" id="GO:0071313">
    <property type="term" value="P:cellular response to caffeine"/>
    <property type="evidence" value="ECO:0000314"/>
    <property type="project" value="UniProtKB"/>
</dbReference>
<dbReference type="GO" id="GO:0006936">
    <property type="term" value="P:muscle contraction"/>
    <property type="evidence" value="ECO:0000250"/>
    <property type="project" value="UniProtKB"/>
</dbReference>
<dbReference type="GO" id="GO:0045933">
    <property type="term" value="P:positive regulation of muscle contraction"/>
    <property type="evidence" value="ECO:0000303"/>
    <property type="project" value="ComplexPortal"/>
</dbReference>
<dbReference type="GO" id="GO:0060314">
    <property type="term" value="P:regulation of ryanodine-sensitive calcium-release channel activity"/>
    <property type="evidence" value="ECO:0000315"/>
    <property type="project" value="CAFA"/>
</dbReference>
<dbReference type="GO" id="GO:0051209">
    <property type="term" value="P:release of sequestered calcium ion into cytosol"/>
    <property type="evidence" value="ECO:0000250"/>
    <property type="project" value="UniProtKB"/>
</dbReference>
<dbReference type="DisProt" id="DP00228"/>
<dbReference type="FunFam" id="1.10.287.70:FF:000007">
    <property type="entry name" value="Voltage-dependent L-type calcium channel subunit alpha"/>
    <property type="match status" value="1"/>
</dbReference>
<dbReference type="FunFam" id="1.10.287.70:FF:000009">
    <property type="entry name" value="Voltage-dependent L-type calcium channel subunit alpha"/>
    <property type="match status" value="1"/>
</dbReference>
<dbReference type="FunFam" id="1.10.287.70:FF:000021">
    <property type="entry name" value="Voltage-dependent L-type calcium channel subunit alpha"/>
    <property type="match status" value="1"/>
</dbReference>
<dbReference type="FunFam" id="1.20.120.350:FF:000001">
    <property type="entry name" value="Voltage-dependent L-type calcium channel subunit alpha"/>
    <property type="match status" value="1"/>
</dbReference>
<dbReference type="FunFam" id="1.20.120.350:FF:000006">
    <property type="entry name" value="Voltage-dependent L-type calcium channel subunit alpha"/>
    <property type="match status" value="1"/>
</dbReference>
<dbReference type="FunFam" id="1.20.120.350:FF:000010">
    <property type="entry name" value="Voltage-dependent L-type calcium channel subunit alpha"/>
    <property type="match status" value="1"/>
</dbReference>
<dbReference type="FunFam" id="1.20.120.350:FF:000040">
    <property type="entry name" value="Voltage-dependent L-type calcium channel subunit alpha"/>
    <property type="match status" value="1"/>
</dbReference>
<dbReference type="FunFam" id="1.10.238.10:FF:000063">
    <property type="entry name" value="Voltage-dependent N-type calcium channel subunit alpha"/>
    <property type="match status" value="1"/>
</dbReference>
<dbReference type="Gene3D" id="1.10.287.70">
    <property type="match status" value="4"/>
</dbReference>
<dbReference type="Gene3D" id="6.10.250.2180">
    <property type="match status" value="1"/>
</dbReference>
<dbReference type="Gene3D" id="6.10.250.2500">
    <property type="match status" value="1"/>
</dbReference>
<dbReference type="Gene3D" id="1.20.120.350">
    <property type="entry name" value="Voltage-gated potassium channels. Chain C"/>
    <property type="match status" value="4"/>
</dbReference>
<dbReference type="InterPro" id="IPR031688">
    <property type="entry name" value="CAC1F_C"/>
</dbReference>
<dbReference type="InterPro" id="IPR031649">
    <property type="entry name" value="GPHH_dom"/>
</dbReference>
<dbReference type="InterPro" id="IPR005821">
    <property type="entry name" value="Ion_trans_dom"/>
</dbReference>
<dbReference type="InterPro" id="IPR014873">
    <property type="entry name" value="VDCC_a1su_IQ"/>
</dbReference>
<dbReference type="InterPro" id="IPR050599">
    <property type="entry name" value="VDCC_alpha-1_subunit"/>
</dbReference>
<dbReference type="InterPro" id="IPR005450">
    <property type="entry name" value="VDCC_L_a1ssu"/>
</dbReference>
<dbReference type="InterPro" id="IPR005446">
    <property type="entry name" value="VDCC_L_a1su"/>
</dbReference>
<dbReference type="InterPro" id="IPR002077">
    <property type="entry name" value="VDCCAlpha1"/>
</dbReference>
<dbReference type="InterPro" id="IPR027359">
    <property type="entry name" value="Volt_channel_dom_sf"/>
</dbReference>
<dbReference type="PANTHER" id="PTHR45628">
    <property type="entry name" value="VOLTAGE-DEPENDENT CALCIUM CHANNEL TYPE A SUBUNIT ALPHA-1"/>
    <property type="match status" value="1"/>
</dbReference>
<dbReference type="PANTHER" id="PTHR45628:SF9">
    <property type="entry name" value="VOLTAGE-DEPENDENT L-TYPE CALCIUM CHANNEL SUBUNIT ALPHA-1S"/>
    <property type="match status" value="1"/>
</dbReference>
<dbReference type="Pfam" id="PF08763">
    <property type="entry name" value="Ca_chan_IQ"/>
    <property type="match status" value="1"/>
</dbReference>
<dbReference type="Pfam" id="PF16885">
    <property type="entry name" value="CAC1F_C"/>
    <property type="match status" value="1"/>
</dbReference>
<dbReference type="Pfam" id="PF16905">
    <property type="entry name" value="GPHH"/>
    <property type="match status" value="1"/>
</dbReference>
<dbReference type="Pfam" id="PF00520">
    <property type="entry name" value="Ion_trans"/>
    <property type="match status" value="4"/>
</dbReference>
<dbReference type="PRINTS" id="PR00167">
    <property type="entry name" value="CACHANNEL"/>
</dbReference>
<dbReference type="PRINTS" id="PR01630">
    <property type="entry name" value="LVDCCALPHA1"/>
</dbReference>
<dbReference type="PRINTS" id="PR01634">
    <property type="entry name" value="LVDCCALPHA1S"/>
</dbReference>
<dbReference type="SMART" id="SM01062">
    <property type="entry name" value="Ca_chan_IQ"/>
    <property type="match status" value="1"/>
</dbReference>
<dbReference type="SUPFAM" id="SSF81324">
    <property type="entry name" value="Voltage-gated potassium channels"/>
    <property type="match status" value="4"/>
</dbReference>
<sequence length="1873" mass="212029">MEPSSPQDEGLRKKQPKKPLPEVLPRPPRALFCLTLQNPLRKACISIVEWKPFETIILLTIFANCVALAVYLPMPEDDNNSLNLGLEKLEYFFLTVFSIEAAMKIIAYGFLFHQDAYLRSGWNVLDFIIVFLGVFTAILEQVNVIQSNTAPMSSKGAGLDVKALRAFRVLRPLRLVSGVPSLQVVLNSIFKAMLPLFHIALLVLFMVIIYAIIGLELFKGKMHKTCYYIGTDIVATVENEKPSPCARTGSGRPCTINGSECRGGWPGPNHGITHFDNFGFSMLTVYQCITMEGWTDVLYWVNDAIGNEWPWIYFVTLILLGSFFILNLVLGVLSGEFTKEREKAKSRGTFQKLREKQQLEEDLRGYMSWITQGEVMDVEDLREGKLSLEEGGSDTESLYEIEGLNKIIQFIRHWRQWNRVFRWKCHDLVKSRVFYWLVILIVALNTLSIASEHHNQPLWLTHLQDIANRVLLSLFTIEMLLKMYGLGLRQYFMSIFNRFDCFVVCSGILELLLVESGAMTPLGISVLRCIRLLRLFKITKYWTSLSNLVASLLNSIRSIASLLLLLFLFIIIFALLGMQLFGGRYDFEDTEVRRSNFDNFPQALISVFQVLTGEDWNSVMYNGIMAYGGPSYPGVLVCIYFIILFVCGNYILLNVFLAIAVDNLAEAESLTSAQKAKAEERKRRKMSRGLPDKTEEEKSVMAKKLEQKPKGEGIPTTAKLKVDEFESNVNEVKDPYPSADFPGDDEEDEPEIPVSPRPRPLAELQLKEKAVPIPEASSFFIFSPTNKVRVLCHRIVNATWFTNFILLFILLSSAALAAEDPIRAESVRNQILGYFDIAFTSVFTVEIVLKMTTYGAFLHKGSFCRNYFNILDLLVVAVSLISMGLESSTISVVKILRVLRVLRPLRAINRAKGLKHVVQCVFVAIRTIGNIVLVTTLLQFMFACIGVQLFKGKFFSCNDLSKMTEEECRGYYYVYKDGDPTQMELRPRQWIHNDFHFDNVLSAMMSLFTVSTFEGWPQLLYRAIDSNEEDMGPVYNNRVEMAIFFIIYIILIAFFMMNIFVGFVIVTFQEQGETEYKNCELDKNQRQCVQYALKARPLRCYIPKNPYQYQVWYVVTSSYFEYLMFALIMLNTICLGMQHYHQSEEMNHISDILNVAFTIIFTLEMILKLLAFKARGYFGDPWNVFDFLIVIGSIIDVILSEIDTFLASSGGLYCLGGGCGNVDPDESARISSAFFRLFRVMRLIKLLSRAEGVRTLLWTFIKSFQALPYVALLIVMLFFIYAVIGMQMFGKIALVDGTQINRNNNFQTFPQAVLLLFRCATGEAWQEILLACSYGKLCDPESDYAPGEEYTCGTNFAYYYFISFYMLCAFLIINLFVAVIMDNFDYLTRDWSILGPHHLDEFKAIWAEYDPEAKGRIKHLDVVTLLRRIQPPLGFGKFCPHRVACKRLVGMNMPLNSDGTVTFNATLFALVRTALKIKTEGNFEQANEELRAIIKKIWKRTSMKLLDQVIPPIGDDEVTVGKFYATFLIQEHFRKFMKRQEEYYGYRPKKDTVQIQAGLRTIEEEAAPEIRRTISGDLTAEEELERAMVEAAMEERIFRRTGGLFGQVDTFLERTNSLPPVMANQRPLQFAEIEMEELESPVFLEDFPQDARTNPLARANTNNANANVAYGNSNHSNNQMFSSVHCEREFPGEAETPAAGRGALSHSHRALGPHSKPCAGKLNGQLVQPGMPINQAPPAPCQQPSTDPPERGQRRTSLTGSLQDEAPQRRSSEGSTPRRPAPATALLIQEALVRGGLDTLAADAGFVTATSQALADACQMEPEEVEVAATELLKARESVQGMASVPGSLSRRSSLGSLDQVQGSQETLIPPRP</sequence>
<feature type="chain" id="PRO_0000053945" description="Voltage-dependent L-type calcium channel subunit alpha-1S">
    <location>
        <begin position="1"/>
        <end position="1873"/>
    </location>
</feature>
<feature type="topological domain" description="Cytoplasmic" evidence="16">
    <location>
        <begin position="1"/>
        <end position="51"/>
    </location>
</feature>
<feature type="transmembrane region" description="Helical; Name=S1 of repeat I" evidence="16">
    <location>
        <begin position="52"/>
        <end position="70"/>
    </location>
</feature>
<feature type="topological domain" description="Extracellular" evidence="16">
    <location>
        <begin position="71"/>
        <end position="85"/>
    </location>
</feature>
<feature type="transmembrane region" description="Helical; Name=S2 of repeat I" evidence="16">
    <location>
        <begin position="86"/>
        <end position="106"/>
    </location>
</feature>
<feature type="topological domain" description="Cytoplasmic" evidence="16">
    <location>
        <begin position="107"/>
        <end position="115"/>
    </location>
</feature>
<feature type="transmembrane region" description="Helical; Name=S3 of repeat I" evidence="16">
    <location>
        <begin position="116"/>
        <end position="136"/>
    </location>
</feature>
<feature type="topological domain" description="Extracellular" evidence="16">
    <location>
        <begin position="137"/>
        <end position="160"/>
    </location>
</feature>
<feature type="transmembrane region" description="Helical; Name=S4 of repeat I" evidence="16">
    <location>
        <begin position="161"/>
        <end position="179"/>
    </location>
</feature>
<feature type="topological domain" description="Cytoplasmic" evidence="16">
    <location>
        <begin position="180"/>
        <end position="196"/>
    </location>
</feature>
<feature type="transmembrane region" description="Helical; Name=S5 of repeat I" evidence="16">
    <location>
        <begin position="197"/>
        <end position="218"/>
    </location>
</feature>
<feature type="topological domain" description="Extracellular" evidence="16">
    <location>
        <begin position="219"/>
        <end position="279"/>
    </location>
</feature>
<feature type="intramembrane region" description="Pore-forming" evidence="15 16">
    <location>
        <begin position="280"/>
        <end position="301"/>
    </location>
</feature>
<feature type="topological domain" description="Extracellular" evidence="16">
    <location>
        <begin position="302"/>
        <end position="309"/>
    </location>
</feature>
<feature type="transmembrane region" description="Helical; Name=S6 of repeat I" evidence="16">
    <location>
        <begin position="310"/>
        <end position="330"/>
    </location>
</feature>
<feature type="topological domain" description="Cytoplasmic" evidence="16">
    <location>
        <begin position="331"/>
        <end position="432"/>
    </location>
</feature>
<feature type="transmembrane region" description="Helical; Name=S1 of repeat II" evidence="16">
    <location>
        <begin position="433"/>
        <end position="451"/>
    </location>
</feature>
<feature type="topological domain" description="Extracellular" evidence="16">
    <location>
        <begin position="452"/>
        <end position="462"/>
    </location>
</feature>
<feature type="transmembrane region" description="Helical; Name=S2 of repeat II" evidence="16">
    <location>
        <begin position="463"/>
        <end position="483"/>
    </location>
</feature>
<feature type="topological domain" description="Cytoplasmic" evidence="16">
    <location>
        <begin position="484"/>
        <end position="494"/>
    </location>
</feature>
<feature type="transmembrane region" description="Helical; Name=S3 of repeat II" evidence="16">
    <location>
        <begin position="495"/>
        <end position="514"/>
    </location>
</feature>
<feature type="topological domain" description="Extracellular" evidence="16">
    <location>
        <begin position="515"/>
        <end position="523"/>
    </location>
</feature>
<feature type="transmembrane region" description="Helical; Name=S4 of repeat II" evidence="16">
    <location>
        <begin position="524"/>
        <end position="542"/>
    </location>
</feature>
<feature type="topological domain" description="Cytoplasmic" evidence="16">
    <location>
        <begin position="543"/>
        <end position="561"/>
    </location>
</feature>
<feature type="transmembrane region" description="Helical; Name=S5 of repeat II" evidence="16">
    <location>
        <begin position="562"/>
        <end position="581"/>
    </location>
</feature>
<feature type="topological domain" description="Extracellular" evidence="16">
    <location>
        <begin position="582"/>
        <end position="601"/>
    </location>
</feature>
<feature type="intramembrane region" description="Pore-forming" evidence="15 16">
    <location>
        <begin position="602"/>
        <end position="623"/>
    </location>
</feature>
<feature type="topological domain" description="Extracellular" evidence="16">
    <location>
        <begin position="624"/>
        <end position="633"/>
    </location>
</feature>
<feature type="transmembrane region" description="Helical; Name=S6 of repeat II" evidence="16">
    <location>
        <begin position="634"/>
        <end position="653"/>
    </location>
</feature>
<feature type="topological domain" description="Cytoplasmic" evidence="16">
    <location>
        <begin position="654"/>
        <end position="799"/>
    </location>
</feature>
<feature type="transmembrane region" description="Helical; Name=S1 of repeat III" evidence="16">
    <location>
        <begin position="800"/>
        <end position="818"/>
    </location>
</feature>
<feature type="topological domain" description="Extracellular" evidence="16">
    <location>
        <begin position="819"/>
        <end position="830"/>
    </location>
</feature>
<feature type="transmembrane region" description="Helical; Name=S2 of repeat III" evidence="16">
    <location>
        <begin position="831"/>
        <end position="850"/>
    </location>
</feature>
<feature type="topological domain" description="Cytoplasmic" evidence="16">
    <location>
        <begin position="851"/>
        <end position="866"/>
    </location>
</feature>
<feature type="transmembrane region" description="Helical; Name=S3 of repeat III" evidence="16">
    <location>
        <begin position="867"/>
        <end position="885"/>
    </location>
</feature>
<feature type="topological domain" description="Extracellular" evidence="16">
    <location>
        <begin position="886"/>
        <end position="892"/>
    </location>
</feature>
<feature type="transmembrane region" description="Helical; Name=S4 of repeat III" evidence="16">
    <location>
        <begin position="893"/>
        <end position="911"/>
    </location>
</feature>
<feature type="topological domain" description="Cytoplasmic" evidence="16">
    <location>
        <begin position="912"/>
        <end position="930"/>
    </location>
</feature>
<feature type="transmembrane region" description="Helical; Name=S5 of repeat III" evidence="16">
    <location>
        <begin position="931"/>
        <end position="950"/>
    </location>
</feature>
<feature type="topological domain" description="Extracellular" evidence="16">
    <location>
        <begin position="951"/>
        <end position="1000"/>
    </location>
</feature>
<feature type="intramembrane region" description="Pore-forming" evidence="15 16">
    <location>
        <begin position="1001"/>
        <end position="1021"/>
    </location>
</feature>
<feature type="topological domain" description="Extracellular" evidence="16">
    <location>
        <begin position="1022"/>
        <end position="1038"/>
    </location>
</feature>
<feature type="transmembrane region" description="Helical; Name=S6 of repeat III" evidence="16">
    <location>
        <begin position="1039"/>
        <end position="1060"/>
    </location>
</feature>
<feature type="topological domain" description="Cytoplasmic" evidence="16">
    <location>
        <begin position="1061"/>
        <end position="1118"/>
    </location>
</feature>
<feature type="transmembrane region" description="Helical; Name=S1 of repeat IV" evidence="16">
    <location>
        <begin position="1119"/>
        <end position="1140"/>
    </location>
</feature>
<feature type="topological domain" description="Extracellular" evidence="16">
    <location>
        <begin position="1141"/>
        <end position="1148"/>
    </location>
</feature>
<feature type="transmembrane region" description="Helical; Name=S2 of repeat IV" evidence="16">
    <location>
        <begin position="1149"/>
        <end position="1170"/>
    </location>
</feature>
<feature type="topological domain" description="Cytoplasmic" evidence="16">
    <location>
        <begin position="1171"/>
        <end position="1180"/>
    </location>
</feature>
<feature type="transmembrane region" description="Helical; Name=S3 of repeat IV" evidence="16">
    <location>
        <begin position="1181"/>
        <end position="1200"/>
    </location>
</feature>
<feature type="topological domain" description="Extracellular" evidence="16">
    <location>
        <begin position="1201"/>
        <end position="1231"/>
    </location>
</feature>
<feature type="transmembrane region" description="Helical; Name=S4 of repeat IV" evidence="16">
    <location>
        <begin position="1232"/>
        <end position="1250"/>
    </location>
</feature>
<feature type="topological domain" description="Cytoplasmic" evidence="16">
    <location>
        <begin position="1251"/>
        <end position="1268"/>
    </location>
</feature>
<feature type="transmembrane region" description="Helical; Name=S5 of repeat IV" evidence="16">
    <location>
        <begin position="1269"/>
        <end position="1289"/>
    </location>
</feature>
<feature type="topological domain" description="Extracellular" evidence="16">
    <location>
        <begin position="1290"/>
        <end position="1311"/>
    </location>
</feature>
<feature type="intramembrane region" description="Pore-forming" evidence="15 16">
    <location>
        <begin position="1312"/>
        <end position="1330"/>
    </location>
</feature>
<feature type="topological domain" description="Extracellular" evidence="16">
    <location>
        <begin position="1331"/>
        <end position="1356"/>
    </location>
</feature>
<feature type="transmembrane region" description="Helical; Name=S6 of repeat IV" evidence="16">
    <location>
        <begin position="1357"/>
        <end position="1381"/>
    </location>
</feature>
<feature type="topological domain" description="Cytoplasmic" evidence="16">
    <location>
        <begin position="1382"/>
        <end position="1873"/>
    </location>
</feature>
<feature type="repeat" description="I" evidence="30">
    <location>
        <begin position="38"/>
        <end position="337"/>
    </location>
</feature>
<feature type="repeat" description="II" evidence="30">
    <location>
        <begin position="418"/>
        <end position="664"/>
    </location>
</feature>
<feature type="repeat" description="III" evidence="30">
    <location>
        <begin position="786"/>
        <end position="1068"/>
    </location>
</feature>
<feature type="repeat" description="IV" evidence="30">
    <location>
        <begin position="1105"/>
        <end position="1384"/>
    </location>
</feature>
<feature type="region of interest" description="Disordered" evidence="4">
    <location>
        <begin position="1"/>
        <end position="23"/>
    </location>
</feature>
<feature type="region of interest" description="Binding to the beta subunit" evidence="16">
    <location>
        <begin position="357"/>
        <end position="374"/>
    </location>
</feature>
<feature type="region of interest" description="Disordered" evidence="4">
    <location>
        <begin position="673"/>
        <end position="717"/>
    </location>
</feature>
<feature type="region of interest" description="Disordered" evidence="4">
    <location>
        <begin position="731"/>
        <end position="757"/>
    </location>
</feature>
<feature type="region of interest" description="Interaction with STAC, STAC2 and STAC3 (via SH3 domains)" evidence="20">
    <location>
        <begin position="747"/>
        <end position="760"/>
    </location>
</feature>
<feature type="region of interest" description="Dihydropyridine binding" evidence="8 9">
    <location>
        <begin position="988"/>
        <end position="1077"/>
    </location>
</feature>
<feature type="region of interest" description="Dihydropyridine binding" evidence="8">
    <location>
        <begin position="1337"/>
        <end position="1403"/>
    </location>
</feature>
<feature type="region of interest" description="Phenylalkylamine binding" evidence="11">
    <location>
        <begin position="1349"/>
        <end position="1391"/>
    </location>
</feature>
<feature type="region of interest" description="Interaction with calmodulin" evidence="2">
    <location>
        <begin position="1522"/>
        <end position="1542"/>
    </location>
</feature>
<feature type="region of interest" description="Disordered" evidence="4">
    <location>
        <begin position="1689"/>
        <end position="1782"/>
    </location>
</feature>
<feature type="region of interest" description="Disordered" evidence="4">
    <location>
        <begin position="1841"/>
        <end position="1873"/>
    </location>
</feature>
<feature type="short sequence motif" description="Selectivity filter of repeat I" evidence="38 39">
    <location>
        <begin position="290"/>
        <end position="293"/>
    </location>
</feature>
<feature type="short sequence motif" description="Selectivity filter of repeat II" evidence="38 39">
    <location>
        <begin position="612"/>
        <end position="615"/>
    </location>
</feature>
<feature type="short sequence motif" description="Selectivity filter of repeat III" evidence="38 39">
    <location>
        <begin position="1012"/>
        <end position="1015"/>
    </location>
</feature>
<feature type="short sequence motif" description="Selectivity filter of repeat IV" evidence="38 39">
    <location>
        <begin position="1321"/>
        <end position="1324"/>
    </location>
</feature>
<feature type="compositionally biased region" description="Basic and acidic residues" evidence="4">
    <location>
        <begin position="690"/>
        <end position="711"/>
    </location>
</feature>
<feature type="compositionally biased region" description="Acidic residues" evidence="4">
    <location>
        <begin position="742"/>
        <end position="751"/>
    </location>
</feature>
<feature type="compositionally biased region" description="Low complexity" evidence="4">
    <location>
        <begin position="1847"/>
        <end position="1858"/>
    </location>
</feature>
<feature type="binding site" evidence="16 43">
    <location>
        <position position="292"/>
    </location>
    <ligand>
        <name>Ca(2+)</name>
        <dbReference type="ChEBI" id="CHEBI:29108"/>
    </ligand>
</feature>
<feature type="binding site" evidence="16 43">
    <location>
        <position position="614"/>
    </location>
    <ligand>
        <name>Ca(2+)</name>
        <dbReference type="ChEBI" id="CHEBI:29108"/>
    </ligand>
</feature>
<feature type="binding site" evidence="16 43">
    <location>
        <position position="1014"/>
    </location>
    <ligand>
        <name>Ca(2+)</name>
        <dbReference type="ChEBI" id="CHEBI:29108"/>
    </ligand>
</feature>
<feature type="site" description="Cleavage" evidence="30">
    <location>
        <begin position="1690"/>
        <end position="1691"/>
    </location>
</feature>
<feature type="modified residue" description="Phosphoserine" evidence="1">
    <location>
        <position position="393"/>
    </location>
</feature>
<feature type="modified residue" description="Phosphoserine" evidence="1">
    <location>
        <position position="397"/>
    </location>
</feature>
<feature type="modified residue" description="Phosphoserine; by PKA" evidence="40">
    <location>
        <position position="687"/>
    </location>
</feature>
<feature type="modified residue" description="Phosphoserine; by PKA and CAMK2" evidence="36">
    <location>
        <position position="1575"/>
    </location>
</feature>
<feature type="modified residue" description="Phosphothreonine; by CK2" evidence="36">
    <location>
        <position position="1579"/>
    </location>
</feature>
<feature type="modified residue" description="Phosphoserine; by PKA" evidence="40">
    <location>
        <position position="1617"/>
    </location>
</feature>
<feature type="glycosylation site" description="N-linked (GlcNAc...) asparagine" evidence="3">
    <location>
        <position position="79"/>
    </location>
</feature>
<feature type="glycosylation site" description="N-linked (GlcNAc...) asparagine" evidence="43">
    <location>
        <position position="257"/>
    </location>
</feature>
<feature type="disulfide bond" evidence="16 43 44">
    <location>
        <begin position="226"/>
        <end position="254"/>
    </location>
</feature>
<feature type="disulfide bond" evidence="16 43 44">
    <location>
        <begin position="245"/>
        <end position="261"/>
    </location>
</feature>
<feature type="disulfide bond" evidence="16 43 44">
    <location>
        <begin position="957"/>
        <end position="968"/>
    </location>
</feature>
<feature type="disulfide bond" evidence="16 43 44">
    <location>
        <begin position="1338"/>
        <end position="1352"/>
    </location>
</feature>
<feature type="sequence variant">
    <original>R</original>
    <variation>K</variation>
    <location>
        <position position="165"/>
    </location>
</feature>
<feature type="sequence variant">
    <original>G</original>
    <variation>D</variation>
    <location>
        <position position="258"/>
    </location>
</feature>
<feature type="sequence variant">
    <original>P</original>
    <variation>L</variation>
    <location>
        <position position="1870"/>
    </location>
</feature>
<feature type="mutagenesis site" description="Loss of interaction with STAC2 and STAC3 and strongly decreased channel activity; when associated with A-757." evidence="20">
    <original>IP</original>
    <variation>AA</variation>
    <location>
        <begin position="752"/>
        <end position="753"/>
    </location>
</feature>
<feature type="mutagenesis site" description="Loss of interaction with STAC3." evidence="20">
    <original>PRP</original>
    <variation>ARA</variation>
    <location>
        <begin position="756"/>
        <end position="758"/>
    </location>
</feature>
<feature type="mutagenesis site" description="Loss of interaction with STAC2 and STAC3 and strongly decreased channel activity; when associated with 752-AA-753." evidence="20">
    <original>R</original>
    <variation>A</variation>
    <location>
        <position position="757"/>
    </location>
</feature>
<feature type="mutagenesis site" description="Shifts the threshold potential to more negative values and lowers the concentration threshold for channel activation by caffeine." evidence="7">
    <original>R</original>
    <variation>H</variation>
    <location>
        <position position="1086"/>
    </location>
</feature>
<feature type="sequence conflict" description="In Ref. 2; AAA31159." evidence="30" ref="2">
    <original>T</original>
    <variation>R</variation>
    <location>
        <position position="694"/>
    </location>
</feature>
<feature type="sequence conflict" description="In Ref. 2; AAA31159." evidence="30" ref="2">
    <original>T</original>
    <variation>M</variation>
    <location>
        <position position="1808"/>
    </location>
</feature>
<feature type="sequence conflict" description="In Ref. 2; AAA31159." evidence="30" ref="2">
    <original>A</original>
    <variation>V</variation>
    <location>
        <position position="1815"/>
    </location>
</feature>
<feature type="sequence conflict" description="In Ref. 2; AAA31159." evidence="30" ref="2">
    <original>A</original>
    <variation>E</variation>
    <location>
        <position position="1835"/>
    </location>
</feature>
<feature type="strand" evidence="47">
    <location>
        <begin position="35"/>
        <end position="38"/>
    </location>
</feature>
<feature type="strand" evidence="46">
    <location>
        <begin position="40"/>
        <end position="42"/>
    </location>
</feature>
<feature type="helix" evidence="47">
    <location>
        <begin position="45"/>
        <end position="48"/>
    </location>
</feature>
<feature type="strand" evidence="47">
    <location>
        <begin position="50"/>
        <end position="52"/>
    </location>
</feature>
<feature type="helix" evidence="47">
    <location>
        <begin position="53"/>
        <end position="68"/>
    </location>
</feature>
<feature type="helix" evidence="47">
    <location>
        <begin position="75"/>
        <end position="77"/>
    </location>
</feature>
<feature type="helix" evidence="47">
    <location>
        <begin position="81"/>
        <end position="100"/>
    </location>
</feature>
<feature type="strand" evidence="47">
    <location>
        <begin position="103"/>
        <end position="108"/>
    </location>
</feature>
<feature type="helix" evidence="47">
    <location>
        <begin position="111"/>
        <end position="119"/>
    </location>
</feature>
<feature type="helix" evidence="47">
    <location>
        <begin position="121"/>
        <end position="143"/>
    </location>
</feature>
<feature type="helix" evidence="47">
    <location>
        <begin position="164"/>
        <end position="173"/>
    </location>
</feature>
<feature type="helix" evidence="47">
    <location>
        <begin position="174"/>
        <end position="178"/>
    </location>
</feature>
<feature type="helix" evidence="47">
    <location>
        <begin position="180"/>
        <end position="192"/>
    </location>
</feature>
<feature type="helix" evidence="47">
    <location>
        <begin position="194"/>
        <end position="196"/>
    </location>
</feature>
<feature type="helix" evidence="47">
    <location>
        <begin position="197"/>
        <end position="218"/>
    </location>
</feature>
<feature type="strand" evidence="47">
    <location>
        <begin position="226"/>
        <end position="228"/>
    </location>
</feature>
<feature type="strand" evidence="47">
    <location>
        <begin position="247"/>
        <end position="251"/>
    </location>
</feature>
<feature type="strand" evidence="47">
    <location>
        <begin position="259"/>
        <end position="261"/>
    </location>
</feature>
<feature type="turn" evidence="46">
    <location>
        <begin position="268"/>
        <end position="271"/>
    </location>
</feature>
<feature type="helix" evidence="47">
    <location>
        <begin position="278"/>
        <end position="289"/>
    </location>
</feature>
<feature type="helix" evidence="47">
    <location>
        <begin position="294"/>
        <end position="305"/>
    </location>
</feature>
<feature type="strand" evidence="46">
    <location>
        <begin position="307"/>
        <end position="309"/>
    </location>
</feature>
<feature type="helix" evidence="47">
    <location>
        <begin position="310"/>
        <end position="319"/>
    </location>
</feature>
<feature type="helix" evidence="47">
    <location>
        <begin position="321"/>
        <end position="345"/>
    </location>
</feature>
<feature type="turn" evidence="47">
    <location>
        <begin position="346"/>
        <end position="349"/>
    </location>
</feature>
<feature type="helix" evidence="45">
    <location>
        <begin position="359"/>
        <end position="372"/>
    </location>
</feature>
<feature type="helix" evidence="47">
    <location>
        <begin position="421"/>
        <end position="429"/>
    </location>
</feature>
<feature type="strand" evidence="46">
    <location>
        <begin position="431"/>
        <end position="433"/>
    </location>
</feature>
<feature type="helix" evidence="47">
    <location>
        <begin position="434"/>
        <end position="437"/>
    </location>
</feature>
<feature type="helix" evidence="47">
    <location>
        <begin position="439"/>
        <end position="451"/>
    </location>
</feature>
<feature type="helix" evidence="47">
    <location>
        <begin position="458"/>
        <end position="485"/>
    </location>
</feature>
<feature type="helix" evidence="47">
    <location>
        <begin position="488"/>
        <end position="493"/>
    </location>
</feature>
<feature type="helix" evidence="47">
    <location>
        <begin position="495"/>
        <end position="516"/>
    </location>
</feature>
<feature type="turn" evidence="49">
    <location>
        <begin position="520"/>
        <end position="522"/>
    </location>
</feature>
<feature type="helix" evidence="47">
    <location>
        <begin position="523"/>
        <end position="529"/>
    </location>
</feature>
<feature type="helix" evidence="47">
    <location>
        <begin position="530"/>
        <end position="541"/>
    </location>
</feature>
<feature type="helix" evidence="47">
    <location>
        <begin position="543"/>
        <end position="558"/>
    </location>
</feature>
<feature type="helix" evidence="47">
    <location>
        <begin position="560"/>
        <end position="581"/>
    </location>
</feature>
<feature type="turn" evidence="47">
    <location>
        <begin position="582"/>
        <end position="584"/>
    </location>
</feature>
<feature type="strand" evidence="47">
    <location>
        <begin position="588"/>
        <end position="590"/>
    </location>
</feature>
<feature type="strand" evidence="46">
    <location>
        <begin position="597"/>
        <end position="599"/>
    </location>
</feature>
<feature type="helix" evidence="47">
    <location>
        <begin position="600"/>
        <end position="612"/>
    </location>
</feature>
<feature type="turn" evidence="46">
    <location>
        <begin position="613"/>
        <end position="615"/>
    </location>
</feature>
<feature type="helix" evidence="47">
    <location>
        <begin position="616"/>
        <end position="625"/>
    </location>
</feature>
<feature type="turn" evidence="47">
    <location>
        <begin position="626"/>
        <end position="628"/>
    </location>
</feature>
<feature type="strand" evidence="47">
    <location>
        <begin position="629"/>
        <end position="631"/>
    </location>
</feature>
<feature type="helix" evidence="47">
    <location>
        <begin position="632"/>
        <end position="636"/>
    </location>
</feature>
<feature type="helix" evidence="47">
    <location>
        <begin position="638"/>
        <end position="676"/>
    </location>
</feature>
<feature type="helix" evidence="47">
    <location>
        <begin position="679"/>
        <end position="686"/>
    </location>
</feature>
<feature type="helix" evidence="47">
    <location>
        <begin position="791"/>
        <end position="797"/>
    </location>
</feature>
<feature type="helix" evidence="47">
    <location>
        <begin position="799"/>
        <end position="805"/>
    </location>
</feature>
<feature type="turn" evidence="47">
    <location>
        <begin position="806"/>
        <end position="808"/>
    </location>
</feature>
<feature type="helix" evidence="47">
    <location>
        <begin position="809"/>
        <end position="815"/>
    </location>
</feature>
<feature type="strand" evidence="47">
    <location>
        <begin position="816"/>
        <end position="818"/>
    </location>
</feature>
<feature type="strand" evidence="48">
    <location>
        <begin position="821"/>
        <end position="823"/>
    </location>
</feature>
<feature type="helix" evidence="47">
    <location>
        <begin position="827"/>
        <end position="831"/>
    </location>
</feature>
<feature type="helix" evidence="47">
    <location>
        <begin position="833"/>
        <end position="853"/>
    </location>
</feature>
<feature type="helix" evidence="47">
    <location>
        <begin position="870"/>
        <end position="882"/>
    </location>
</feature>
<feature type="helix" evidence="47">
    <location>
        <begin position="893"/>
        <end position="898"/>
    </location>
</feature>
<feature type="helix" evidence="50">
    <location>
        <begin position="899"/>
        <end position="902"/>
    </location>
</feature>
<feature type="helix" evidence="47">
    <location>
        <begin position="903"/>
        <end position="905"/>
    </location>
</feature>
<feature type="turn" evidence="47">
    <location>
        <begin position="906"/>
        <end position="910"/>
    </location>
</feature>
<feature type="helix" evidence="47">
    <location>
        <begin position="912"/>
        <end position="923"/>
    </location>
</feature>
<feature type="turn" evidence="48">
    <location>
        <begin position="926"/>
        <end position="929"/>
    </location>
</feature>
<feature type="helix" evidence="47">
    <location>
        <begin position="930"/>
        <end position="950"/>
    </location>
</feature>
<feature type="strand" evidence="47">
    <location>
        <begin position="955"/>
        <end position="959"/>
    </location>
</feature>
<feature type="turn" evidence="47">
    <location>
        <begin position="965"/>
        <end position="967"/>
    </location>
</feature>
<feature type="strand" evidence="47">
    <location>
        <begin position="970"/>
        <end position="975"/>
    </location>
</feature>
<feature type="helix" evidence="46">
    <location>
        <begin position="976"/>
        <end position="978"/>
    </location>
</feature>
<feature type="strand" evidence="47">
    <location>
        <begin position="983"/>
        <end position="987"/>
    </location>
</feature>
<feature type="strand" evidence="47">
    <location>
        <begin position="990"/>
        <end position="992"/>
    </location>
</feature>
<feature type="helix" evidence="47">
    <location>
        <begin position="1000"/>
        <end position="1011"/>
    </location>
</feature>
<feature type="turn" evidence="47">
    <location>
        <begin position="1012"/>
        <end position="1015"/>
    </location>
</feature>
<feature type="helix" evidence="47">
    <location>
        <begin position="1016"/>
        <end position="1025"/>
    </location>
</feature>
<feature type="strand" evidence="48">
    <location>
        <begin position="1028"/>
        <end position="1030"/>
    </location>
</feature>
<feature type="helix" evidence="47">
    <location>
        <begin position="1041"/>
        <end position="1070"/>
    </location>
</feature>
<feature type="turn" evidence="47">
    <location>
        <begin position="1071"/>
        <end position="1074"/>
    </location>
</feature>
<feature type="strand" evidence="47">
    <location>
        <begin position="1079"/>
        <end position="1081"/>
    </location>
</feature>
<feature type="helix" evidence="47">
    <location>
        <begin position="1083"/>
        <end position="1094"/>
    </location>
</feature>
<feature type="helix" evidence="47">
    <location>
        <begin position="1106"/>
        <end position="1116"/>
    </location>
</feature>
<feature type="helix" evidence="47">
    <location>
        <begin position="1118"/>
        <end position="1135"/>
    </location>
</feature>
<feature type="helix" evidence="47">
    <location>
        <begin position="1144"/>
        <end position="1170"/>
    </location>
</feature>
<feature type="turn" evidence="47">
    <location>
        <begin position="1171"/>
        <end position="1179"/>
    </location>
</feature>
<feature type="helix" evidence="47">
    <location>
        <begin position="1181"/>
        <end position="1205"/>
    </location>
</feature>
<feature type="helix" evidence="47">
    <location>
        <begin position="1235"/>
        <end position="1237"/>
    </location>
</feature>
<feature type="helix" evidence="47">
    <location>
        <begin position="1240"/>
        <end position="1248"/>
    </location>
</feature>
<feature type="helix" evidence="47">
    <location>
        <begin position="1251"/>
        <end position="1261"/>
    </location>
</feature>
<feature type="turn" evidence="47">
    <location>
        <begin position="1262"/>
        <end position="1266"/>
    </location>
</feature>
<feature type="helix" evidence="47">
    <location>
        <begin position="1268"/>
        <end position="1289"/>
    </location>
</feature>
<feature type="strand" evidence="47">
    <location>
        <begin position="1290"/>
        <end position="1292"/>
    </location>
</feature>
<feature type="strand" evidence="47">
    <location>
        <begin position="1298"/>
        <end position="1304"/>
    </location>
</feature>
<feature type="strand" evidence="47">
    <location>
        <begin position="1306"/>
        <end position="1308"/>
    </location>
</feature>
<feature type="helix" evidence="47">
    <location>
        <begin position="1309"/>
        <end position="1320"/>
    </location>
</feature>
<feature type="helix" evidence="47">
    <location>
        <begin position="1325"/>
        <end position="1331"/>
    </location>
</feature>
<feature type="strand" evidence="47">
    <location>
        <begin position="1333"/>
        <end position="1336"/>
    </location>
</feature>
<feature type="helix" evidence="47">
    <location>
        <begin position="1349"/>
        <end position="1351"/>
    </location>
</feature>
<feature type="helix" evidence="47">
    <location>
        <begin position="1357"/>
        <end position="1381"/>
    </location>
</feature>
<feature type="helix" evidence="47">
    <location>
        <begin position="1384"/>
        <end position="1387"/>
    </location>
</feature>
<feature type="turn" evidence="46">
    <location>
        <begin position="1391"/>
        <end position="1393"/>
    </location>
</feature>
<feature type="helix" evidence="47">
    <location>
        <begin position="1396"/>
        <end position="1406"/>
    </location>
</feature>
<feature type="turn" evidence="47">
    <location>
        <begin position="1407"/>
        <end position="1409"/>
    </location>
</feature>
<feature type="strand" evidence="47">
    <location>
        <begin position="1415"/>
        <end position="1417"/>
    </location>
</feature>
<feature type="turn" evidence="47">
    <location>
        <begin position="1420"/>
        <end position="1422"/>
    </location>
</feature>
<feature type="helix" evidence="47">
    <location>
        <begin position="1423"/>
        <end position="1426"/>
    </location>
</feature>
<feature type="turn" evidence="47">
    <location>
        <begin position="1431"/>
        <end position="1433"/>
    </location>
</feature>
<feature type="turn" evidence="47">
    <location>
        <begin position="1440"/>
        <end position="1442"/>
    </location>
</feature>
<feature type="helix" evidence="47">
    <location>
        <begin position="1443"/>
        <end position="1450"/>
    </location>
</feature>
<feature type="helix" evidence="47">
    <location>
        <begin position="1463"/>
        <end position="1474"/>
    </location>
</feature>
<feature type="helix" evidence="47">
    <location>
        <begin position="1483"/>
        <end position="1492"/>
    </location>
</feature>
<feature type="turn" evidence="47">
    <location>
        <begin position="1498"/>
        <end position="1500"/>
    </location>
</feature>
<feature type="helix" evidence="47">
    <location>
        <begin position="1501"/>
        <end position="1505"/>
    </location>
</feature>
<proteinExistence type="evidence at protein level"/>
<gene>
    <name type="primary">CACNA1S</name>
    <name type="synonym">CACH1</name>
    <name type="synonym">CACNL1A3</name>
</gene>
<protein>
    <recommendedName>
        <fullName>Voltage-dependent L-type calcium channel subunit alpha-1S</fullName>
    </recommendedName>
    <alternativeName>
        <fullName>Calcium channel, L type, alpha-1 polypeptide, isoform 3, skeletal muscle</fullName>
    </alternativeName>
    <alternativeName>
        <fullName evidence="25 26 27">Dihydropyridine receptor alpha-1S subunit</fullName>
        <shortName evidence="24 27">DHPR</shortName>
    </alternativeName>
    <alternativeName>
        <fullName>Voltage-gated calcium channel subunit alpha Cav1.1</fullName>
    </alternativeName>
</protein>